<organism>
    <name type="scientific">Hahella chejuensis (strain KCTC 2396)</name>
    <dbReference type="NCBI Taxonomy" id="349521"/>
    <lineage>
        <taxon>Bacteria</taxon>
        <taxon>Pseudomonadati</taxon>
        <taxon>Pseudomonadota</taxon>
        <taxon>Gammaproteobacteria</taxon>
        <taxon>Oceanospirillales</taxon>
        <taxon>Hahellaceae</taxon>
        <taxon>Hahella</taxon>
    </lineage>
</organism>
<feature type="chain" id="PRO_0000313926" description="tRNA U34 carboxymethyltransferase">
    <location>
        <begin position="1"/>
        <end position="324"/>
    </location>
</feature>
<feature type="binding site" evidence="1">
    <location>
        <position position="92"/>
    </location>
    <ligand>
        <name>carboxy-S-adenosyl-L-methionine</name>
        <dbReference type="ChEBI" id="CHEBI:134278"/>
    </ligand>
</feature>
<feature type="binding site" evidence="1">
    <location>
        <position position="106"/>
    </location>
    <ligand>
        <name>carboxy-S-adenosyl-L-methionine</name>
        <dbReference type="ChEBI" id="CHEBI:134278"/>
    </ligand>
</feature>
<feature type="binding site" evidence="1">
    <location>
        <position position="111"/>
    </location>
    <ligand>
        <name>carboxy-S-adenosyl-L-methionine</name>
        <dbReference type="ChEBI" id="CHEBI:134278"/>
    </ligand>
</feature>
<feature type="binding site" evidence="1">
    <location>
        <position position="131"/>
    </location>
    <ligand>
        <name>carboxy-S-adenosyl-L-methionine</name>
        <dbReference type="ChEBI" id="CHEBI:134278"/>
    </ligand>
</feature>
<feature type="binding site" evidence="1">
    <location>
        <begin position="153"/>
        <end position="155"/>
    </location>
    <ligand>
        <name>carboxy-S-adenosyl-L-methionine</name>
        <dbReference type="ChEBI" id="CHEBI:134278"/>
    </ligand>
</feature>
<feature type="binding site" evidence="1">
    <location>
        <position position="197"/>
    </location>
    <ligand>
        <name>carboxy-S-adenosyl-L-methionine</name>
        <dbReference type="ChEBI" id="CHEBI:134278"/>
    </ligand>
</feature>
<feature type="binding site" evidence="1">
    <location>
        <position position="201"/>
    </location>
    <ligand>
        <name>carboxy-S-adenosyl-L-methionine</name>
        <dbReference type="ChEBI" id="CHEBI:134278"/>
    </ligand>
</feature>
<feature type="binding site" evidence="1">
    <location>
        <position position="316"/>
    </location>
    <ligand>
        <name>carboxy-S-adenosyl-L-methionine</name>
        <dbReference type="ChEBI" id="CHEBI:134278"/>
    </ligand>
</feature>
<reference key="1">
    <citation type="journal article" date="2005" name="Nucleic Acids Res.">
        <title>Genomic blueprint of Hahella chejuensis, a marine microbe producing an algicidal agent.</title>
        <authorList>
            <person name="Jeong H."/>
            <person name="Yim J.H."/>
            <person name="Lee C."/>
            <person name="Choi S.-H."/>
            <person name="Park Y.K."/>
            <person name="Yoon S.H."/>
            <person name="Hur C.-G."/>
            <person name="Kang H.-Y."/>
            <person name="Kim D."/>
            <person name="Lee H.H."/>
            <person name="Park K.H."/>
            <person name="Park S.-H."/>
            <person name="Park H.-S."/>
            <person name="Lee H.K."/>
            <person name="Oh T.K."/>
            <person name="Kim J.F."/>
        </authorList>
    </citation>
    <scope>NUCLEOTIDE SEQUENCE [LARGE SCALE GENOMIC DNA]</scope>
    <source>
        <strain>KCTC 2396</strain>
    </source>
</reference>
<evidence type="ECO:0000255" key="1">
    <source>
        <dbReference type="HAMAP-Rule" id="MF_01590"/>
    </source>
</evidence>
<sequence length="324" mass="37449">MIRFDDFLAHADKNRLQRFIPDFERVLDERYYSRTHGDYEGWWNALQQLPTAQASQIQFDVDTLMIGAEGDLDPEEQESLIKGLRGLHPWRKGPFNFFGNHIDTEWRSDWKWTRVAPHLSPLKGRFVLDVGCGSGYHCWRMLGEGAQFVLGVDPSPKFLFQFHCVKKYAPTAPVYYLPLRSEDLPPNMDAFDTVFSMGVLYHRRSPFDHIDELKAALRPGGELVLETLIVPGDENTVLTPLDRYAQMRNVWFIGSSLATKRWLERCGFEDVRIVDEGVTSLDEQRQTDWMTFQSLKDFLDPEDFSRTVEGYPAPARAVLVARKP</sequence>
<dbReference type="EC" id="2.5.1.-" evidence="1"/>
<dbReference type="EMBL" id="CP000155">
    <property type="protein sequence ID" value="ABC29063.1"/>
    <property type="molecule type" value="Genomic_DNA"/>
</dbReference>
<dbReference type="RefSeq" id="WP_011396132.1">
    <property type="nucleotide sequence ID" value="NC_007645.1"/>
</dbReference>
<dbReference type="SMR" id="Q2SJW1"/>
<dbReference type="STRING" id="349521.HCH_02237"/>
<dbReference type="KEGG" id="hch:HCH_02237"/>
<dbReference type="eggNOG" id="COG2227">
    <property type="taxonomic scope" value="Bacteria"/>
</dbReference>
<dbReference type="HOGENOM" id="CLU_052665_0_0_6"/>
<dbReference type="OrthoDB" id="9773188at2"/>
<dbReference type="Proteomes" id="UP000000238">
    <property type="component" value="Chromosome"/>
</dbReference>
<dbReference type="GO" id="GO:0008168">
    <property type="term" value="F:methyltransferase activity"/>
    <property type="evidence" value="ECO:0007669"/>
    <property type="project" value="TreeGrafter"/>
</dbReference>
<dbReference type="GO" id="GO:0016765">
    <property type="term" value="F:transferase activity, transferring alkyl or aryl (other than methyl) groups"/>
    <property type="evidence" value="ECO:0007669"/>
    <property type="project" value="UniProtKB-UniRule"/>
</dbReference>
<dbReference type="GO" id="GO:0002098">
    <property type="term" value="P:tRNA wobble uridine modification"/>
    <property type="evidence" value="ECO:0007669"/>
    <property type="project" value="InterPro"/>
</dbReference>
<dbReference type="CDD" id="cd02440">
    <property type="entry name" value="AdoMet_MTases"/>
    <property type="match status" value="1"/>
</dbReference>
<dbReference type="Gene3D" id="3.40.50.150">
    <property type="entry name" value="Vaccinia Virus protein VP39"/>
    <property type="match status" value="1"/>
</dbReference>
<dbReference type="HAMAP" id="MF_01590">
    <property type="entry name" value="tRNA_carboxymethyltr_CmoB"/>
    <property type="match status" value="1"/>
</dbReference>
<dbReference type="InterPro" id="IPR010017">
    <property type="entry name" value="CmoB"/>
</dbReference>
<dbReference type="InterPro" id="IPR027555">
    <property type="entry name" value="Mo5U34_MeTrfas-like"/>
</dbReference>
<dbReference type="InterPro" id="IPR029063">
    <property type="entry name" value="SAM-dependent_MTases_sf"/>
</dbReference>
<dbReference type="NCBIfam" id="NF011650">
    <property type="entry name" value="PRK15068.1"/>
    <property type="match status" value="1"/>
</dbReference>
<dbReference type="NCBIfam" id="TIGR00452">
    <property type="entry name" value="tRNA 5-methoxyuridine(34)/uridine 5-oxyacetic acid(34) synthase CmoB"/>
    <property type="match status" value="1"/>
</dbReference>
<dbReference type="PANTHER" id="PTHR43464">
    <property type="entry name" value="METHYLTRANSFERASE"/>
    <property type="match status" value="1"/>
</dbReference>
<dbReference type="PANTHER" id="PTHR43464:SF95">
    <property type="entry name" value="TRNA U34 CARBOXYMETHYLTRANSFERASE"/>
    <property type="match status" value="1"/>
</dbReference>
<dbReference type="Pfam" id="PF08003">
    <property type="entry name" value="Methyltransf_9"/>
    <property type="match status" value="1"/>
</dbReference>
<dbReference type="SUPFAM" id="SSF53335">
    <property type="entry name" value="S-adenosyl-L-methionine-dependent methyltransferases"/>
    <property type="match status" value="1"/>
</dbReference>
<name>CMOB_HAHCH</name>
<protein>
    <recommendedName>
        <fullName evidence="1">tRNA U34 carboxymethyltransferase</fullName>
        <ecNumber evidence="1">2.5.1.-</ecNumber>
    </recommendedName>
</protein>
<comment type="function">
    <text evidence="1">Catalyzes carboxymethyl transfer from carboxy-S-adenosyl-L-methionine (Cx-SAM) to 5-hydroxyuridine (ho5U) to form 5-carboxymethoxyuridine (cmo5U) at position 34 in tRNAs.</text>
</comment>
<comment type="catalytic activity">
    <reaction evidence="1">
        <text>carboxy-S-adenosyl-L-methionine + 5-hydroxyuridine(34) in tRNA = 5-carboxymethoxyuridine(34) in tRNA + S-adenosyl-L-homocysteine + H(+)</text>
        <dbReference type="Rhea" id="RHEA:52848"/>
        <dbReference type="Rhea" id="RHEA-COMP:13381"/>
        <dbReference type="Rhea" id="RHEA-COMP:13383"/>
        <dbReference type="ChEBI" id="CHEBI:15378"/>
        <dbReference type="ChEBI" id="CHEBI:57856"/>
        <dbReference type="ChEBI" id="CHEBI:134278"/>
        <dbReference type="ChEBI" id="CHEBI:136877"/>
        <dbReference type="ChEBI" id="CHEBI:136879"/>
    </reaction>
</comment>
<comment type="subunit">
    <text evidence="1">Homotetramer.</text>
</comment>
<comment type="similarity">
    <text evidence="1">Belongs to the class I-like SAM-binding methyltransferase superfamily. CmoB family.</text>
</comment>
<gene>
    <name evidence="1" type="primary">cmoB</name>
    <name type="ordered locus">HCH_02237</name>
</gene>
<proteinExistence type="inferred from homology"/>
<accession>Q2SJW1</accession>
<keyword id="KW-1185">Reference proteome</keyword>
<keyword id="KW-0808">Transferase</keyword>
<keyword id="KW-0819">tRNA processing</keyword>